<proteinExistence type="inferred from homology"/>
<comment type="function">
    <text evidence="1">Component of the Mediator complex, a coactivator involved in the regulated transcription of nearly all RNA polymerase II-dependent genes. Mediator functions as a bridge to convey information from gene-specific regulatory proteins to the basal RNA polymerase II transcription machinery. Mediator is recruited to promoters by direct interactions with regulatory proteins and serves as a scaffold for the assembly of a functional preinitiation complex with RNA polymerase II and the general transcription factors (By similarity).</text>
</comment>
<comment type="subunit">
    <text evidence="1">Component of the Mediator complex.</text>
</comment>
<comment type="subcellular location">
    <subcellularLocation>
        <location evidence="1">Nucleus</location>
    </subcellularLocation>
</comment>
<comment type="similarity">
    <text evidence="3">Belongs to the Mediator complex subunit 7 family.</text>
</comment>
<sequence>MSTANGDLISSLYPPPPVYVKFFTTENLNKLQEWQRQQNDEEIETKQEEADDKDEKDNEKQNETQDTVPPGELRFLVPPQPPSGTHYRGYGNIWSFEDKLPSLKSANWEQLYKDDDESITSETKIKELHKLMDSLLLNFLELIGLASIDPSQYESKIKDISLILININHLLNTYRPHQSRESLIMLLRKQIDAKRASINQVEKVCSEVKQKLLKLTNIQDVYKKDSIVLPDNSDNSPMAENAESIKDEIIKKLLSEH</sequence>
<protein>
    <recommendedName>
        <fullName>Mediator of RNA polymerase II transcription subunit 7</fullName>
    </recommendedName>
    <alternativeName>
        <fullName>Mediator complex subunit 7</fullName>
    </alternativeName>
</protein>
<name>MED7_PICST</name>
<dbReference type="EMBL" id="CP000502">
    <property type="protein sequence ID" value="ABN68608.2"/>
    <property type="molecule type" value="Genomic_DNA"/>
</dbReference>
<dbReference type="RefSeq" id="XP_001386637.2">
    <property type="nucleotide sequence ID" value="XM_001386600.1"/>
</dbReference>
<dbReference type="SMR" id="A3LZW1"/>
<dbReference type="FunCoup" id="A3LZW1">
    <property type="interactions" value="769"/>
</dbReference>
<dbReference type="STRING" id="322104.A3LZW1"/>
<dbReference type="GeneID" id="4840876"/>
<dbReference type="KEGG" id="pic:PICST_66143"/>
<dbReference type="eggNOG" id="KOG0570">
    <property type="taxonomic scope" value="Eukaryota"/>
</dbReference>
<dbReference type="HOGENOM" id="CLU_065214_0_1_1"/>
<dbReference type="InParanoid" id="A3LZW1"/>
<dbReference type="OMA" id="IHDSYSM"/>
<dbReference type="OrthoDB" id="10253553at2759"/>
<dbReference type="Proteomes" id="UP000002258">
    <property type="component" value="Chromosome 8"/>
</dbReference>
<dbReference type="GO" id="GO:0070847">
    <property type="term" value="C:core mediator complex"/>
    <property type="evidence" value="ECO:0007669"/>
    <property type="project" value="EnsemblFungi"/>
</dbReference>
<dbReference type="GO" id="GO:0016592">
    <property type="term" value="C:mediator complex"/>
    <property type="evidence" value="ECO:0007669"/>
    <property type="project" value="InterPro"/>
</dbReference>
<dbReference type="GO" id="GO:0003713">
    <property type="term" value="F:transcription coactivator activity"/>
    <property type="evidence" value="ECO:0007669"/>
    <property type="project" value="EnsemblFungi"/>
</dbReference>
<dbReference type="GO" id="GO:0000122">
    <property type="term" value="P:negative regulation of transcription by RNA polymerase II"/>
    <property type="evidence" value="ECO:0007669"/>
    <property type="project" value="EnsemblFungi"/>
</dbReference>
<dbReference type="GO" id="GO:0032968">
    <property type="term" value="P:positive regulation of transcription elongation by RNA polymerase II"/>
    <property type="evidence" value="ECO:0007669"/>
    <property type="project" value="EnsemblFungi"/>
</dbReference>
<dbReference type="GO" id="GO:0060261">
    <property type="term" value="P:positive regulation of transcription initiation by RNA polymerase II"/>
    <property type="evidence" value="ECO:0007669"/>
    <property type="project" value="EnsemblFungi"/>
</dbReference>
<dbReference type="GO" id="GO:0051123">
    <property type="term" value="P:RNA polymerase II preinitiation complex assembly"/>
    <property type="evidence" value="ECO:0007669"/>
    <property type="project" value="EnsemblFungi"/>
</dbReference>
<dbReference type="Gene3D" id="6.10.140.1520">
    <property type="match status" value="1"/>
</dbReference>
<dbReference type="Gene3D" id="6.10.140.200">
    <property type="match status" value="1"/>
</dbReference>
<dbReference type="InterPro" id="IPR037212">
    <property type="entry name" value="Med7/Med21-like"/>
</dbReference>
<dbReference type="InterPro" id="IPR009244">
    <property type="entry name" value="Mediatior_Med7"/>
</dbReference>
<dbReference type="InterPro" id="IPR044888">
    <property type="entry name" value="Mediatior_Med7_sf"/>
</dbReference>
<dbReference type="PANTHER" id="PTHR21428">
    <property type="entry name" value="MEDIATOR OF RNA POLYMERASE II TRANSCRIPTION SUBUNIT 7"/>
    <property type="match status" value="1"/>
</dbReference>
<dbReference type="PANTHER" id="PTHR21428:SF11">
    <property type="entry name" value="MEDIATOR OF RNA POLYMERASE II TRANSCRIPTION SUBUNIT 7"/>
    <property type="match status" value="1"/>
</dbReference>
<dbReference type="Pfam" id="PF05983">
    <property type="entry name" value="Med7"/>
    <property type="match status" value="1"/>
</dbReference>
<dbReference type="SUPFAM" id="SSF140718">
    <property type="entry name" value="Mediator hinge subcomplex-like"/>
    <property type="match status" value="1"/>
</dbReference>
<accession>A3LZW1</accession>
<keyword id="KW-0010">Activator</keyword>
<keyword id="KW-0539">Nucleus</keyword>
<keyword id="KW-1185">Reference proteome</keyword>
<keyword id="KW-0804">Transcription</keyword>
<keyword id="KW-0805">Transcription regulation</keyword>
<evidence type="ECO:0000250" key="1"/>
<evidence type="ECO:0000256" key="2">
    <source>
        <dbReference type="SAM" id="MobiDB-lite"/>
    </source>
</evidence>
<evidence type="ECO:0000305" key="3"/>
<gene>
    <name type="primary">MED7</name>
    <name type="ORF">PICST_66143</name>
</gene>
<feature type="chain" id="PRO_0000303207" description="Mediator of RNA polymerase II transcription subunit 7">
    <location>
        <begin position="1"/>
        <end position="257"/>
    </location>
</feature>
<feature type="region of interest" description="Disordered" evidence="2">
    <location>
        <begin position="33"/>
        <end position="74"/>
    </location>
</feature>
<feature type="compositionally biased region" description="Basic and acidic residues" evidence="2">
    <location>
        <begin position="44"/>
        <end position="63"/>
    </location>
</feature>
<organism>
    <name type="scientific">Scheffersomyces stipitis (strain ATCC 58785 / CBS 6054 / NBRC 10063 / NRRL Y-11545)</name>
    <name type="common">Yeast</name>
    <name type="synonym">Pichia stipitis</name>
    <dbReference type="NCBI Taxonomy" id="322104"/>
    <lineage>
        <taxon>Eukaryota</taxon>
        <taxon>Fungi</taxon>
        <taxon>Dikarya</taxon>
        <taxon>Ascomycota</taxon>
        <taxon>Saccharomycotina</taxon>
        <taxon>Pichiomycetes</taxon>
        <taxon>Debaryomycetaceae</taxon>
        <taxon>Scheffersomyces</taxon>
    </lineage>
</organism>
<reference key="1">
    <citation type="journal article" date="2007" name="Nat. Biotechnol.">
        <title>Genome sequence of the lignocellulose-bioconverting and xylose-fermenting yeast Pichia stipitis.</title>
        <authorList>
            <person name="Jeffries T.W."/>
            <person name="Grigoriev I.V."/>
            <person name="Grimwood J."/>
            <person name="Laplaza J.M."/>
            <person name="Aerts A."/>
            <person name="Salamov A."/>
            <person name="Schmutz J."/>
            <person name="Lindquist E."/>
            <person name="Dehal P."/>
            <person name="Shapiro H."/>
            <person name="Jin Y.-S."/>
            <person name="Passoth V."/>
            <person name="Richardson P.M."/>
        </authorList>
    </citation>
    <scope>NUCLEOTIDE SEQUENCE [LARGE SCALE GENOMIC DNA]</scope>
    <source>
        <strain>ATCC 58785 / CBS 6054 / NBRC 10063 / NRRL Y-11545</strain>
    </source>
</reference>